<evidence type="ECO:0000255" key="1">
    <source>
        <dbReference type="HAMAP-Rule" id="MF_00227"/>
    </source>
</evidence>
<reference key="1">
    <citation type="submission" date="2007-04" db="EMBL/GenBank/DDBJ databases">
        <title>Complete sequence of Shewanella putrefaciens CN-32.</title>
        <authorList>
            <consortium name="US DOE Joint Genome Institute"/>
            <person name="Copeland A."/>
            <person name="Lucas S."/>
            <person name="Lapidus A."/>
            <person name="Barry K."/>
            <person name="Detter J.C."/>
            <person name="Glavina del Rio T."/>
            <person name="Hammon N."/>
            <person name="Israni S."/>
            <person name="Dalin E."/>
            <person name="Tice H."/>
            <person name="Pitluck S."/>
            <person name="Chain P."/>
            <person name="Malfatti S."/>
            <person name="Shin M."/>
            <person name="Vergez L."/>
            <person name="Schmutz J."/>
            <person name="Larimer F."/>
            <person name="Land M."/>
            <person name="Hauser L."/>
            <person name="Kyrpides N."/>
            <person name="Mikhailova N."/>
            <person name="Romine M.F."/>
            <person name="Fredrickson J."/>
            <person name="Tiedje J."/>
            <person name="Richardson P."/>
        </authorList>
    </citation>
    <scope>NUCLEOTIDE SEQUENCE [LARGE SCALE GENOMIC DNA]</scope>
    <source>
        <strain>CN-32 / ATCC BAA-453</strain>
    </source>
</reference>
<name>RNPA_SHEPC</name>
<dbReference type="EC" id="3.1.26.5" evidence="1"/>
<dbReference type="EMBL" id="CP000681">
    <property type="protein sequence ID" value="ABP77707.1"/>
    <property type="molecule type" value="Genomic_DNA"/>
</dbReference>
<dbReference type="SMR" id="A4YCM4"/>
<dbReference type="STRING" id="319224.Sputcn32_4004"/>
<dbReference type="KEGG" id="spc:Sputcn32_4004"/>
<dbReference type="eggNOG" id="COG0594">
    <property type="taxonomic scope" value="Bacteria"/>
</dbReference>
<dbReference type="HOGENOM" id="CLU_117179_11_0_6"/>
<dbReference type="GO" id="GO:0030677">
    <property type="term" value="C:ribonuclease P complex"/>
    <property type="evidence" value="ECO:0007669"/>
    <property type="project" value="TreeGrafter"/>
</dbReference>
<dbReference type="GO" id="GO:0042781">
    <property type="term" value="F:3'-tRNA processing endoribonuclease activity"/>
    <property type="evidence" value="ECO:0007669"/>
    <property type="project" value="TreeGrafter"/>
</dbReference>
<dbReference type="GO" id="GO:0004526">
    <property type="term" value="F:ribonuclease P activity"/>
    <property type="evidence" value="ECO:0007669"/>
    <property type="project" value="UniProtKB-UniRule"/>
</dbReference>
<dbReference type="GO" id="GO:0000049">
    <property type="term" value="F:tRNA binding"/>
    <property type="evidence" value="ECO:0007669"/>
    <property type="project" value="UniProtKB-UniRule"/>
</dbReference>
<dbReference type="GO" id="GO:0001682">
    <property type="term" value="P:tRNA 5'-leader removal"/>
    <property type="evidence" value="ECO:0007669"/>
    <property type="project" value="UniProtKB-UniRule"/>
</dbReference>
<dbReference type="FunFam" id="3.30.230.10:FF:000016">
    <property type="entry name" value="Ribonuclease P protein component"/>
    <property type="match status" value="1"/>
</dbReference>
<dbReference type="Gene3D" id="3.30.230.10">
    <property type="match status" value="1"/>
</dbReference>
<dbReference type="HAMAP" id="MF_00227">
    <property type="entry name" value="RNase_P"/>
    <property type="match status" value="1"/>
</dbReference>
<dbReference type="InterPro" id="IPR020568">
    <property type="entry name" value="Ribosomal_Su5_D2-typ_SF"/>
</dbReference>
<dbReference type="InterPro" id="IPR014721">
    <property type="entry name" value="Ribsml_uS5_D2-typ_fold_subgr"/>
</dbReference>
<dbReference type="InterPro" id="IPR000100">
    <property type="entry name" value="RNase_P"/>
</dbReference>
<dbReference type="InterPro" id="IPR020539">
    <property type="entry name" value="RNase_P_CS"/>
</dbReference>
<dbReference type="NCBIfam" id="TIGR00188">
    <property type="entry name" value="rnpA"/>
    <property type="match status" value="1"/>
</dbReference>
<dbReference type="PANTHER" id="PTHR33992">
    <property type="entry name" value="RIBONUCLEASE P PROTEIN COMPONENT"/>
    <property type="match status" value="1"/>
</dbReference>
<dbReference type="PANTHER" id="PTHR33992:SF1">
    <property type="entry name" value="RIBONUCLEASE P PROTEIN COMPONENT"/>
    <property type="match status" value="1"/>
</dbReference>
<dbReference type="Pfam" id="PF00825">
    <property type="entry name" value="Ribonuclease_P"/>
    <property type="match status" value="1"/>
</dbReference>
<dbReference type="SUPFAM" id="SSF54211">
    <property type="entry name" value="Ribosomal protein S5 domain 2-like"/>
    <property type="match status" value="1"/>
</dbReference>
<dbReference type="PROSITE" id="PS00648">
    <property type="entry name" value="RIBONUCLEASE_P"/>
    <property type="match status" value="1"/>
</dbReference>
<keyword id="KW-0255">Endonuclease</keyword>
<keyword id="KW-0378">Hydrolase</keyword>
<keyword id="KW-0540">Nuclease</keyword>
<keyword id="KW-0694">RNA-binding</keyword>
<keyword id="KW-0819">tRNA processing</keyword>
<sequence>MTSYTFTRELRLLTPAQFKSVFSNPIKASSAEITLLAIPNSEQHPRLGLTVAKRYVKRANQRNRIKRIIRDSFRLNQHDIPHLDIVVLVRNGVMEMENAEINKLIEKLWRKLSRRYNG</sequence>
<organism>
    <name type="scientific">Shewanella putrefaciens (strain CN-32 / ATCC BAA-453)</name>
    <dbReference type="NCBI Taxonomy" id="319224"/>
    <lineage>
        <taxon>Bacteria</taxon>
        <taxon>Pseudomonadati</taxon>
        <taxon>Pseudomonadota</taxon>
        <taxon>Gammaproteobacteria</taxon>
        <taxon>Alteromonadales</taxon>
        <taxon>Shewanellaceae</taxon>
        <taxon>Shewanella</taxon>
    </lineage>
</organism>
<gene>
    <name evidence="1" type="primary">rnpA</name>
    <name type="ordered locus">Sputcn32_4004</name>
</gene>
<proteinExistence type="inferred from homology"/>
<feature type="chain" id="PRO_1000021460" description="Ribonuclease P protein component">
    <location>
        <begin position="1"/>
        <end position="118"/>
    </location>
</feature>
<accession>A4YCM4</accession>
<comment type="function">
    <text evidence="1">RNaseP catalyzes the removal of the 5'-leader sequence from pre-tRNA to produce the mature 5'-terminus. It can also cleave other RNA substrates such as 4.5S RNA. The protein component plays an auxiliary but essential role in vivo by binding to the 5'-leader sequence and broadening the substrate specificity of the ribozyme.</text>
</comment>
<comment type="catalytic activity">
    <reaction evidence="1">
        <text>Endonucleolytic cleavage of RNA, removing 5'-extranucleotides from tRNA precursor.</text>
        <dbReference type="EC" id="3.1.26.5"/>
    </reaction>
</comment>
<comment type="subunit">
    <text evidence="1">Consists of a catalytic RNA component (M1 or rnpB) and a protein subunit.</text>
</comment>
<comment type="similarity">
    <text evidence="1">Belongs to the RnpA family.</text>
</comment>
<protein>
    <recommendedName>
        <fullName evidence="1">Ribonuclease P protein component</fullName>
        <shortName evidence="1">RNase P protein</shortName>
        <shortName evidence="1">RNaseP protein</shortName>
        <ecNumber evidence="1">3.1.26.5</ecNumber>
    </recommendedName>
    <alternativeName>
        <fullName evidence="1">Protein C5</fullName>
    </alternativeName>
</protein>